<comment type="function">
    <molecule>Gag-Pol polyprotein</molecule>
    <text evidence="1">Mediates, with Gag polyprotein, the essential events in virion assembly, including binding the plasma membrane, making the protein-protein interactions necessary to create spherical particles, recruiting the viral Env proteins, and packaging the genomic RNA via direct interactions with the RNA packaging sequence (Psi). Gag-Pol polyprotein may regulate its own translation, by the binding genomic RNA in the 5'-UTR. At low concentration, the polyprotein would promote translation, whereas at high concentration, the polyprotein would encapsidate genomic RNA and then shut off translation.</text>
</comment>
<comment type="function">
    <molecule>Matrix protein p17</molecule>
    <text evidence="7">Targets the polyprotein to the plasma membrane via a multipartite membrane-binding signal, that includes its myristoylated N-terminus. Matrix protein is part of the pre-integration complex. Implicated in the release from host cell mediated by Vpu. Binds to RNA.</text>
</comment>
<comment type="function">
    <molecule>Capsid protein p24</molecule>
    <text evidence="5 7">Forms the conical core that encapsulates the genomic RNA-nucleocapsid complex in the virion. Most core are conical, with only 7% tubular. The core is constituted by capsid protein hexamer subunits. The core is disassembled soon after virion entry (By similarity). Host restriction factors such as TRIM5-alpha or TRIMCyp bind retroviral capsids and cause premature capsid disassembly, leading to blocks in reverse transcription. Capsid restriction by TRIM5 is one of the factors which restricts HIV-1 to the human species. Host PIN1 apparently facilitates the virion uncoating. On the other hand, interactions with PDZD8 or CYPA stabilize the capsid.</text>
</comment>
<comment type="function">
    <molecule>Nucleocapsid protein p7</molecule>
    <text evidence="5">Encapsulates and protects viral dimeric unspliced genomic RNA (gRNA). Binds these RNAs through its zinc fingers. Acts as a nucleic acid chaperone which is involved in rearangement of nucleic acid secondary structure during gRNA retrotranscription. Also facilitates template switch leading to recombination. As part of the polyprotein, participates in gRNA dimerization, packaging, tRNA incorporation and virion assembly.</text>
</comment>
<comment type="function">
    <molecule>Protease</molecule>
    <text evidence="5 10">Aspartyl protease that mediates proteolytic cleavages of Gag and Gag-Pol polyproteins during or shortly after the release of the virion from the plasma membrane. Cleavages take place as an ordered, step-wise cascade to yield mature proteins. This process is called maturation. Displays maximal activity during the budding process just prior to particle release from the cell. Also cleaves Nef and Vif, probably concomitantly with viral structural proteins on maturation of virus particles. Hydrolyzes host EIF4GI and PABP1 in order to shut off the capped cellular mRNA translation. The resulting inhibition of cellular protein synthesis serves to ensure maximal viral gene expression and to evade host immune response. Also mediates cleavage of host YTHDF3. Mediates cleavage of host CARD8, thereby activating the CARD8 inflammasome, leading to the clearance of latent HIV-1 in patient CD4(+) T-cells after viral reactivation; in contrast, HIV-1 can evade CARD8-sensing when its protease remains inactive in infected cells prior to viral budding (By similarity).</text>
</comment>
<comment type="function">
    <molecule>Reverse transcriptase/ribonuclease H</molecule>
    <text evidence="5">Multifunctional enzyme that converts the viral RNA genome into dsDNA in the cytoplasm, shortly after virus entry into the cell. This enzyme displays a DNA polymerase activity that can copy either DNA or RNA templates, and a ribonuclease H (RNase H) activity that cleaves the RNA strand of RNA-DNA heteroduplexes in a partially processive 3' to 5' endonucleasic mode. Conversion of viral genomic RNA into dsDNA requires many steps. A tRNA(3)-Lys binds to the primer-binding site (PBS) situated at the 5'-end of the viral RNA. RT uses the 3' end of the tRNA primer to perform a short round of RNA-dependent minus-strand DNA synthesis. The reading proceeds through the U5 region and ends after the repeated (R) region which is present at both ends of viral RNA. The portion of the RNA-DNA heteroduplex is digested by the RNase H, resulting in a ssDNA product attached to the tRNA primer. This ssDNA/tRNA hybridizes with the identical R region situated at the 3' end of viral RNA. This template exchange, known as minus-strand DNA strong stop transfer, can be either intra- or intermolecular. RT uses the 3' end of this newly synthesized short ssDNA to perform the RNA-dependent minus-strand DNA synthesis of the whole template. RNase H digests the RNA template except for two polypurine tracts (PPTs) situated at the 5'-end and near the center of the genome. It is not clear if both polymerase and RNase H activities are simultaneous. RNase H probably can proceed both in a polymerase-dependent (RNA cut into small fragments by the same RT performing DNA synthesis) and a polymerase-independent mode (cleavage of remaining RNA fragments by free RTs). Secondly, RT performs DNA-directed plus-strand DNA synthesis using the PPTs that have not been removed by RNase H as primers. PPTs and tRNA primers are then removed by RNase H. The 3' and 5' ssDNA PBS regions hybridize to form a circular dsDNA intermediate. Strand displacement synthesis by RT to the PBS and PPT ends produces a blunt ended, linear dsDNA copy of the viral genome that includes long terminal repeats (LTRs) at both ends.</text>
</comment>
<comment type="function">
    <molecule>Integrase</molecule>
    <text evidence="5">Catalyzes viral DNA integration into the host chromosome, by performing a series of DNA cutting and joining reactions. This enzyme activity takes place after virion entry into a cell and reverse transcription of the RNA genome in dsDNA. The first step in the integration process is 3' processing. This step requires a complex comprising the viral genome, matrix protein, Vpr and integrase. This complex is called the pre-integration complex (PIC). The integrase protein removes 2 nucleotides from each 3' end of the viral DNA, leaving recessed CA OH's at the 3' ends. In the second step, the PIC enters cell nucleus. This process is mediated through integrase and Vpr proteins, and allows the virus to infect a non dividing cell. This ability to enter the nucleus is specific of lentiviruses, other retroviruses cannot and rely on cell division to access cell chromosomes. In the third step, termed strand transfer, the integrase protein joins the previously processed 3' ends to the 5' ends of strands of target cellular DNA at the site of integration. The 5'-ends are produced by integrase-catalyzed staggered cuts, 5 bp apart. A Y-shaped, gapped, recombination intermediate results, with the 5'-ends of the viral DNA strands and the 3' ends of target DNA strands remaining unjoined, flanking a gap of 5 bp. The last step is viral DNA integration into host chromosome. This involves host DNA repair synthesis in which the 5 bp gaps between the unjoined strands are filled in and then ligated. Since this process occurs at both cuts flanking the HIV genome, a 5 bp duplication of host DNA is produced at the ends of HIV-1 integration. Alternatively, Integrase may catalyze the excision of viral DNA just after strand transfer, this is termed disintegration.</text>
</comment>
<comment type="catalytic activity">
    <reaction evidence="10">
        <text>Specific for a P1 residue that is hydrophobic, and P1' variable, but often Pro.</text>
        <dbReference type="EC" id="3.4.23.16"/>
    </reaction>
</comment>
<comment type="catalytic activity">
    <reaction evidence="1">
        <text>Endohydrolysis of RNA in RNA/DNA hybrids. Three different cleavage modes: 1. sequence-specific internal cleavage of RNA. Human immunodeficiency virus type 1 and Moloney murine leukemia virus enzymes prefer to cleave the RNA strand one nucleotide away from the RNA-DNA junction. 2. RNA 5'-end directed cleavage 13-19 nucleotides from the RNA end. 3. DNA 3'-end directed cleavage 15-20 nucleotides away from the primer terminus.</text>
        <dbReference type="EC" id="3.1.26.13"/>
    </reaction>
</comment>
<comment type="catalytic activity">
    <reaction evidence="1">
        <text>3'-end directed exonucleolytic cleavage of viral RNA-DNA hybrid.</text>
        <dbReference type="EC" id="3.1.13.2"/>
    </reaction>
</comment>
<comment type="catalytic activity">
    <reaction evidence="11">
        <text>DNA(n) + a 2'-deoxyribonucleoside 5'-triphosphate = DNA(n+1) + diphosphate</text>
        <dbReference type="Rhea" id="RHEA:22508"/>
        <dbReference type="Rhea" id="RHEA-COMP:17339"/>
        <dbReference type="Rhea" id="RHEA-COMP:17340"/>
        <dbReference type="ChEBI" id="CHEBI:33019"/>
        <dbReference type="ChEBI" id="CHEBI:61560"/>
        <dbReference type="ChEBI" id="CHEBI:173112"/>
        <dbReference type="EC" id="2.7.7.49"/>
    </reaction>
</comment>
<comment type="catalytic activity">
    <reaction evidence="11">
        <text>DNA(n) + a 2'-deoxyribonucleoside 5'-triphosphate = DNA(n+1) + diphosphate</text>
        <dbReference type="Rhea" id="RHEA:22508"/>
        <dbReference type="Rhea" id="RHEA-COMP:17339"/>
        <dbReference type="Rhea" id="RHEA-COMP:17340"/>
        <dbReference type="ChEBI" id="CHEBI:33019"/>
        <dbReference type="ChEBI" id="CHEBI:61560"/>
        <dbReference type="ChEBI" id="CHEBI:173112"/>
        <dbReference type="EC" id="2.7.7.7"/>
    </reaction>
</comment>
<comment type="cofactor">
    <cofactor evidence="1">
        <name>Mg(2+)</name>
        <dbReference type="ChEBI" id="CHEBI:18420"/>
    </cofactor>
    <text evidence="1">Binds 2 magnesium ions for reverse transcriptase polymerase activity.</text>
</comment>
<comment type="cofactor">
    <cofactor evidence="1">
        <name>Mg(2+)</name>
        <dbReference type="ChEBI" id="CHEBI:18420"/>
    </cofactor>
    <text evidence="1">Binds 2 magnesium ions for ribonuclease H (RNase H) activity. Substrate-binding is a precondition for magnesium binding.</text>
</comment>
<comment type="cofactor">
    <cofactor evidence="1">
        <name>Mg(2+)</name>
        <dbReference type="ChEBI" id="CHEBI:18420"/>
    </cofactor>
    <text evidence="1">Magnesium ions are required for integrase activity. Binds at least 1, maybe 2 magnesium ions.</text>
</comment>
<comment type="activity regulation">
    <text evidence="1">Protease: The viral protease is inhibited by many synthetic protease inhibitors (PIs), such as amprenavir, atazanavir, indinavir, loprinavir, nelfinavir, ritonavir and saquinavir. Use of protease inhibitors in tritherapy regimens permit more ambitious therapeutic strategies. Reverse transcriptase/ribonuclease H: RT can be inhibited either by nucleoside RT inhibitors (NRTIs) or by non nucleoside RT inhibitors (NNRTIs). NRTIs act as chain terminators, whereas NNRTIs inhibit DNA polymerization by binding a small hydrophobic pocket near the RT active site and inducing an allosteric change in this region. Classical NRTIs are abacavir, adefovir (PMEA), didanosine (ddI), lamivudine (3TC), stavudine (d4T), tenofovir (PMPA), zalcitabine (ddC), and zidovudine (AZT). Classical NNRTIs are atevirdine (BHAP U-87201E), delavirdine, efavirenz (DMP-266), emivirine (I-EBU), and nevirapine (BI-RG-587). The tritherapies used as a basic effective treatment of AIDS associate two NRTIs and one NNRTI.</text>
</comment>
<comment type="subunit">
    <molecule>Matrix protein p17</molecule>
    <text evidence="5 7">Homotrimer; further assembles as hexamers of trimers (By similarity). Interacts with gp41 (via C-terminus) (By similarity). Interacts with host CALM1; this interaction induces a conformational change in the Matrix protein, triggering exposure of the myristate group (By similarity). Interacts with host AP3D1; this interaction allows the polyprotein trafficking to multivesicular bodies during virus assembly (By similarity). Part of the pre-integration complex (PIC) which is composed of viral genome, matrix protein, Vpr and integrase (By similarity).</text>
</comment>
<comment type="subunit">
    <molecule>Capsid protein p24</molecule>
    <text evidence="5 7">Homodimer; the homodimer further multimerizes as homohexamers or homopentamers. Interacts with human PPIA/CYPA (By similarity); This interaction stabilizes the capsid. Interacts with human NUP153 (By similarity). Interacts with host PDZD8; this interaction stabilizes the capsid (By similarity). Interacts with monkey TRIM5; this interaction destabilizes the capsid (By similarity).</text>
</comment>
<comment type="subunit">
    <molecule>Protease</molecule>
    <text evidence="5 7">Homodimer, whose active site consists of two apposed aspartic acid residues.</text>
</comment>
<comment type="subunit">
    <molecule>Reverse transcriptase/ribonuclease H</molecule>
    <text evidence="3">Heterodimer of p66 RT and p51 RT (RT p66/p51) (By similarity). Heterodimerization of RT is essential for DNA polymerase activity (By similarity). The overall folding of the subdomains is similar in p66 RT and p51 RT but the spatial arrangements of the subdomains are dramatically different (By similarity).</text>
</comment>
<comment type="subunit">
    <molecule>Integrase</molecule>
    <text evidence="4 5 7">Homotetramer; may further associate as a homohexadecamer (By similarity). Part of the pre-integration complex (PIC) which is composed of viral genome, matrix protein, Vpr and integrase. Interacts with human SMARCB1/INI1 and human PSIP1/LEDGF isoform 1. Interacts with human KPNA3; this interaction might play a role in nuclear import of the pre-integration complex (By similarity). Interacts with human NUP153; this interaction might play a role in nuclear import of the pre-integration complex (By similarity).</text>
</comment>
<comment type="subcellular location">
    <molecule>Gag-Pol polyprotein</molecule>
    <subcellularLocation>
        <location>Host cell membrane</location>
        <topology>Lipid-anchor</topology>
    </subcellularLocation>
    <subcellularLocation>
        <location>Host endosome</location>
        <location>Host multivesicular body</location>
    </subcellularLocation>
    <text evidence="7">These locations are linked to virus assembly sites. The main location is the cell membrane, but under some circumstances, late endosomal compartments can serve as productive sites for virion assembly.</text>
</comment>
<comment type="subcellular location">
    <molecule>Matrix protein p17</molecule>
    <subcellularLocation>
        <location>Virion membrane</location>
        <topology evidence="18">Lipid-anchor</topology>
    </subcellularLocation>
    <subcellularLocation>
        <location evidence="1">Host nucleus</location>
    </subcellularLocation>
    <subcellularLocation>
        <location evidence="1">Host cytoplasm</location>
    </subcellularLocation>
</comment>
<comment type="subcellular location">
    <molecule>Capsid protein p24</molecule>
    <subcellularLocation>
        <location evidence="18">Virion</location>
    </subcellularLocation>
</comment>
<comment type="subcellular location">
    <molecule>Nucleocapsid protein p7</molecule>
    <subcellularLocation>
        <location evidence="18">Virion</location>
    </subcellularLocation>
</comment>
<comment type="subcellular location">
    <molecule>Reverse transcriptase/ribonuclease H</molecule>
    <subcellularLocation>
        <location evidence="18">Virion</location>
    </subcellularLocation>
</comment>
<comment type="subcellular location">
    <molecule>Integrase</molecule>
    <subcellularLocation>
        <location evidence="18">Virion</location>
    </subcellularLocation>
    <subcellularLocation>
        <location evidence="18">Host nucleus</location>
    </subcellularLocation>
    <subcellularLocation>
        <location evidence="18">Host cytoplasm</location>
    </subcellularLocation>
    <text evidence="18">Nuclear at initial phase, cytoplasmic at assembly.</text>
</comment>
<comment type="alternative products">
    <event type="ribosomal frameshifting"/>
    <isoform>
        <id>P20892-1</id>
        <name>Gag-Pol polyprotein</name>
        <sequence type="displayed"/>
    </isoform>
    <isoform>
        <id>P20889-1</id>
        <name>Gag polyprotein</name>
        <sequence type="external"/>
    </isoform>
    <text>Translation results in the formation of the Gag polyprotein most of the time. Ribosomal frameshifting at the gag-pol genes boundary occurs at low frequency and produces the Gag-Pol polyprotein. This strategy of translation probably allows the virus to modulate the quantity of each viral protein. Maintenance of a correct Gag to Gag-Pol ratio is essential for RNA dimerization and viral infectivity.</text>
</comment>
<comment type="domain">
    <molecule>Reverse transcriptase/ribonuclease H</molecule>
    <text evidence="1">RT is structured in five subdomains: finger, palm, thumb, connection and RNase H. Within the palm subdomain, the 'primer grip' region is thought to be involved in the positioning of the primer terminus for accommodating the incoming nucleotide. The RNase H domain stabilizes the association of RT with primer-template.</text>
</comment>
<comment type="domain">
    <molecule>Reverse transcriptase/ribonuclease H</molecule>
    <text evidence="1">The tryptophan repeat motif is involved in RT p66/p51 dimerization (By similarity).</text>
</comment>
<comment type="domain">
    <molecule>Integrase</molecule>
    <text evidence="1">The core domain contains the D-x(n)-D-x(35)-E motif, named for the phylogenetically conserved glutamic acid and aspartic acid residues and the invariant 35 amino acid spacing between the second and third acidic residues. Each acidic residue of the D,D(35)E motif is independently essential for the 3'-processing and strand transfer activities of purified integrase protein.</text>
</comment>
<comment type="PTM">
    <molecule>Gag-Pol polyprotein</molecule>
    <text evidence="5 11">Specific enzymatic cleavages by the viral protease yield mature proteins. The protease is released by autocatalytic cleavage. The polyprotein is cleaved during and after budding, this process is termed maturation. Proteolytic cleavage of p66 RT removes the RNase H domain to yield the p51 RT subunit. Nucleocapsid protein p7 might be further cleaved after virus entry.</text>
</comment>
<comment type="PTM">
    <molecule>Matrix protein p17</molecule>
    <text evidence="5">Tyrosine phosphorylated presumably in the virion by a host kinase. Phosphorylation is apparently not a major regulator of membrane association.</text>
</comment>
<comment type="PTM">
    <molecule>Capsid protein p24</molecule>
    <text evidence="6">Phosphorylated possibly by host MAPK1; this phosphorylation is necessary for Pin1-mediated virion uncoating.</text>
</comment>
<comment type="PTM">
    <molecule>Nucleocapsid protein p7</molecule>
    <text evidence="2">Methylated by host PRMT6, impairing its function by reducing RNA annealing and the initiation of reverse transcription.</text>
</comment>
<comment type="miscellaneous">
    <molecule>Reverse transcriptase/ribonuclease H</molecule>
    <text evidence="1">Error-prone enzyme that lacks a proof-reading function. High mutations rate is a direct consequence of this characteristic. RT also displays frequent template switching leading to high recombination rate. Recombination mostly occurs between homologous regions of the two copackaged RNA genomes. If these two RNA molecules derive from different viral strains, reverse transcription will give rise to highly recombinated proviral DNAs.</text>
</comment>
<comment type="miscellaneous">
    <text>HIV-1 lineages are divided in three main groups, M (for Major), O (for Outlier), and N (for New, or Non-M, Non-O). The vast majority of strains found worldwide belong to the group M. Group O seems to be endemic to and largely confined to Cameroon and neighboring countries in West Central Africa, where these viruses represent a small minority of HIV-1 strains. The group N is represented by a limited number of isolates from Cameroonian persons. The group M is further subdivided in 9 clades or subtypes (A to D, F to H, J and K).</text>
</comment>
<comment type="miscellaneous">
    <text>Resistance to inhibitors associated with mutations are observed both in viral protease and in reverse transcriptase. Most of the time, single mutations confer only a modest reduction in drug susceptibility. Combination of several mutations is usually required to develop a high-level drug resistance. These mutations are predominantly found in clade B viruses and not in other genotypes. They are listed in the clade B representative isolate HXB2 (AC P04585).</text>
</comment>
<comment type="miscellaneous">
    <molecule>Isoform Gag-Pol polyprotein</molecule>
    <text>Produced by -1 ribosomal frameshifting.</text>
</comment>
<comment type="online information" name="HIV drug resistance mutations">
    <link uri="https://www.iasusa.org/hiv-drug-resistance/hiv-drug-resistance-mutations/"/>
</comment>
<comment type="online information" name="hivdb">
    <link uri="https://hivdb.stanford.edu"/>
    <text>HIV drug resistance database</text>
</comment>
<organismHost>
    <name type="scientific">Homo sapiens</name>
    <name type="common">Human</name>
    <dbReference type="NCBI Taxonomy" id="9606"/>
</organismHost>
<protein>
    <recommendedName>
        <fullName>Gag-Pol polyprotein</fullName>
    </recommendedName>
    <alternativeName>
        <fullName>Pr160Gag-Pol</fullName>
    </alternativeName>
    <component>
        <recommendedName>
            <fullName>Matrix protein p17</fullName>
            <shortName>MA</shortName>
        </recommendedName>
    </component>
    <component>
        <recommendedName>
            <fullName>Capsid protein p24</fullName>
            <shortName>CA</shortName>
        </recommendedName>
    </component>
    <component>
        <recommendedName>
            <fullName evidence="7">Spacer peptide 1</fullName>
            <shortName>SP1</shortName>
        </recommendedName>
        <alternativeName>
            <fullName>p2</fullName>
        </alternativeName>
    </component>
    <component>
        <recommendedName>
            <fullName>Nucleocapsid protein p7</fullName>
            <shortName>NC</shortName>
        </recommendedName>
    </component>
    <component>
        <recommendedName>
            <fullName>Transframe peptide</fullName>
            <shortName>TF</shortName>
        </recommendedName>
    </component>
    <component>
        <recommendedName>
            <fullName>p6-pol</fullName>
            <shortName>p6*</shortName>
        </recommendedName>
    </component>
    <component>
        <recommendedName>
            <fullName>Protease</fullName>
            <ecNumber>3.4.23.16</ecNumber>
        </recommendedName>
        <alternativeName>
            <fullName>PR</fullName>
        </alternativeName>
        <alternativeName>
            <fullName>Retropepsin</fullName>
        </alternativeName>
    </component>
    <component>
        <recommendedName>
            <fullName>Reverse transcriptase/ribonuclease H</fullName>
            <ecNumber>2.7.7.49</ecNumber>
            <ecNumber>2.7.7.7</ecNumber>
            <ecNumber>3.1.26.13</ecNumber>
        </recommendedName>
        <alternativeName>
            <fullName>Exoribonuclease H</fullName>
            <ecNumber>3.1.13.2</ecNumber>
        </alternativeName>
        <alternativeName>
            <fullName>p66 RT</fullName>
        </alternativeName>
    </component>
    <component>
        <recommendedName>
            <fullName>p51 RT</fullName>
        </recommendedName>
    </component>
    <component>
        <recommendedName>
            <fullName>p15</fullName>
        </recommendedName>
    </component>
    <component>
        <recommendedName>
            <fullName>Integrase</fullName>
            <shortName>IN</shortName>
            <ecNumber evidence="5">2.7.7.-</ecNumber>
            <ecNumber evidence="5">3.1.-.-</ecNumber>
        </recommendedName>
    </component>
</protein>
<gene>
    <name type="primary">gag-pol</name>
</gene>
<feature type="initiator methionine" description="Removed; by host" evidence="1">
    <location>
        <position position="1"/>
    </location>
</feature>
<feature type="chain" id="PRO_0000261277" description="Gag-Pol polyprotein">
    <location>
        <begin position="2"/>
        <end position="1434"/>
    </location>
</feature>
<feature type="chain" id="PRO_0000042403" description="Matrix protein p17" evidence="1">
    <location>
        <begin position="2"/>
        <end position="132"/>
    </location>
</feature>
<feature type="chain" id="PRO_0000042404" description="Capsid protein p24" evidence="1">
    <location>
        <begin position="133"/>
        <end position="363"/>
    </location>
</feature>
<feature type="peptide" id="PRO_0000042405" description="Spacer peptide 1" evidence="1">
    <location>
        <begin position="364"/>
        <end position="376"/>
    </location>
</feature>
<feature type="chain" id="PRO_0000042406" description="Nucleocapsid protein p7" evidence="1">
    <location>
        <begin position="377"/>
        <end position="431"/>
    </location>
</feature>
<feature type="peptide" id="PRO_0000246726" description="Transframe peptide" evidence="8">
    <location>
        <begin position="432"/>
        <end position="439"/>
    </location>
</feature>
<feature type="chain" id="PRO_0000042407" description="p6-pol" evidence="8">
    <location>
        <begin position="440"/>
        <end position="487"/>
    </location>
</feature>
<feature type="chain" id="PRO_0000038661" description="Protease" evidence="1">
    <location>
        <begin position="488"/>
        <end position="586"/>
    </location>
</feature>
<feature type="chain" id="PRO_0000042408" description="Reverse transcriptase/ribonuclease H" evidence="1">
    <location>
        <begin position="587"/>
        <end position="1146"/>
    </location>
</feature>
<feature type="chain" id="PRO_0000042409" description="p51 RT" evidence="1">
    <location>
        <begin position="587"/>
        <end position="1026"/>
    </location>
</feature>
<feature type="chain" id="PRO_0000042410" description="p15" evidence="1">
    <location>
        <begin position="1027"/>
        <end position="1146"/>
    </location>
</feature>
<feature type="chain" id="PRO_0000042411" description="Integrase" evidence="1">
    <location>
        <begin position="1147"/>
        <end position="1434"/>
    </location>
</feature>
<feature type="domain" description="Peptidase A2" evidence="10">
    <location>
        <begin position="507"/>
        <end position="576"/>
    </location>
</feature>
<feature type="domain" description="Reverse transcriptase" evidence="11">
    <location>
        <begin position="630"/>
        <end position="820"/>
    </location>
</feature>
<feature type="domain" description="RNase H type-1" evidence="12">
    <location>
        <begin position="1020"/>
        <end position="1143"/>
    </location>
</feature>
<feature type="domain" description="Integrase catalytic" evidence="14">
    <location>
        <begin position="1200"/>
        <end position="1350"/>
    </location>
</feature>
<feature type="zinc finger region" description="CCHC-type 1" evidence="9">
    <location>
        <begin position="389"/>
        <end position="406"/>
    </location>
</feature>
<feature type="zinc finger region" description="CCHC-type 2" evidence="9">
    <location>
        <begin position="410"/>
        <end position="427"/>
    </location>
</feature>
<feature type="zinc finger region" description="Integrase-type" evidence="13">
    <location>
        <begin position="1149"/>
        <end position="1190"/>
    </location>
</feature>
<feature type="DNA-binding region" description="Integrase-type" evidence="15">
    <location>
        <begin position="1369"/>
        <end position="1416"/>
    </location>
</feature>
<feature type="region of interest" description="Interaction with Gp41" evidence="7">
    <location>
        <begin position="7"/>
        <end position="31"/>
    </location>
</feature>
<feature type="region of interest" description="Interaction with host CALM1" evidence="5">
    <location>
        <begin position="8"/>
        <end position="43"/>
    </location>
</feature>
<feature type="region of interest" description="Interaction with host AP3D1" evidence="7">
    <location>
        <begin position="12"/>
        <end position="19"/>
    </location>
</feature>
<feature type="region of interest" description="Interaction with membrane phosphatidylinositol 4,5-bisphosphate and RNA" evidence="7">
    <location>
        <begin position="14"/>
        <end position="33"/>
    </location>
</feature>
<feature type="region of interest" description="Interaction with membrane phosphatidylinositol 4,5-bisphosphate" evidence="7">
    <location>
        <begin position="73"/>
        <end position="77"/>
    </location>
</feature>
<feature type="region of interest" description="Disordered" evidence="17">
    <location>
        <begin position="106"/>
        <end position="128"/>
    </location>
</feature>
<feature type="region of interest" description="Interaction with human PPIA/CYPA and NUP153" evidence="7">
    <location>
        <begin position="189"/>
        <end position="227"/>
    </location>
</feature>
<feature type="region of interest" description="Dimerization/Multimerization of capsid protein p24" evidence="5">
    <location>
        <begin position="277"/>
        <end position="363"/>
    </location>
</feature>
<feature type="region of interest" description="Disordered" evidence="17">
    <location>
        <begin position="443"/>
        <end position="480"/>
    </location>
</feature>
<feature type="region of interest" description="Dimerization of protease" evidence="5">
    <location>
        <begin position="488"/>
        <end position="492"/>
    </location>
</feature>
<feature type="region of interest" description="Dimerization of protease" evidence="5">
    <location>
        <begin position="536"/>
        <end position="542"/>
    </location>
</feature>
<feature type="region of interest" description="Dimerization of protease" evidence="5">
    <location>
        <begin position="575"/>
        <end position="587"/>
    </location>
</feature>
<feature type="region of interest" description="RT 'primer grip'" evidence="1">
    <location>
        <begin position="813"/>
        <end position="821"/>
    </location>
</feature>
<feature type="short sequence motif" description="Nuclear export signal" evidence="1">
    <location>
        <begin position="16"/>
        <end position="22"/>
    </location>
</feature>
<feature type="short sequence motif" description="Nuclear localization signal" evidence="1">
    <location>
        <begin position="26"/>
        <end position="32"/>
    </location>
</feature>
<feature type="short sequence motif" description="Tryptophan repeat motif" evidence="1">
    <location>
        <begin position="984"/>
        <end position="1000"/>
    </location>
</feature>
<feature type="compositionally biased region" description="Polar residues" evidence="17">
    <location>
        <begin position="116"/>
        <end position="128"/>
    </location>
</feature>
<feature type="compositionally biased region" description="Polar residues" evidence="17">
    <location>
        <begin position="449"/>
        <end position="459"/>
    </location>
</feature>
<feature type="active site" description="For protease activity; shared with dimeric partner" evidence="16">
    <location>
        <position position="512"/>
    </location>
</feature>
<feature type="binding site" evidence="1">
    <location>
        <position position="696"/>
    </location>
    <ligand>
        <name>Mg(2+)</name>
        <dbReference type="ChEBI" id="CHEBI:18420"/>
        <label>1</label>
        <note>catalytic; for reverse transcriptase activity</note>
    </ligand>
</feature>
<feature type="binding site" evidence="1">
    <location>
        <position position="771"/>
    </location>
    <ligand>
        <name>Mg(2+)</name>
        <dbReference type="ChEBI" id="CHEBI:18420"/>
        <label>1</label>
        <note>catalytic; for reverse transcriptase activity</note>
    </ligand>
</feature>
<feature type="binding site" evidence="1">
    <location>
        <position position="772"/>
    </location>
    <ligand>
        <name>Mg(2+)</name>
        <dbReference type="ChEBI" id="CHEBI:18420"/>
        <label>1</label>
        <note>catalytic; for reverse transcriptase activity</note>
    </ligand>
</feature>
<feature type="binding site" evidence="1">
    <location>
        <position position="1029"/>
    </location>
    <ligand>
        <name>Mg(2+)</name>
        <dbReference type="ChEBI" id="CHEBI:18420"/>
        <label>2</label>
        <note>catalytic; for RNase H activity</note>
    </ligand>
</feature>
<feature type="binding site" evidence="1">
    <location>
        <position position="1064"/>
    </location>
    <ligand>
        <name>Mg(2+)</name>
        <dbReference type="ChEBI" id="CHEBI:18420"/>
        <label>2</label>
        <note>catalytic; for RNase H activity</note>
    </ligand>
</feature>
<feature type="binding site" evidence="1">
    <location>
        <position position="1084"/>
    </location>
    <ligand>
        <name>Mg(2+)</name>
        <dbReference type="ChEBI" id="CHEBI:18420"/>
        <label>2</label>
        <note>catalytic; for RNase H activity</note>
    </ligand>
</feature>
<feature type="binding site" evidence="1">
    <location>
        <position position="1135"/>
    </location>
    <ligand>
        <name>Mg(2+)</name>
        <dbReference type="ChEBI" id="CHEBI:18420"/>
        <label>2</label>
        <note>catalytic; for RNase H activity</note>
    </ligand>
</feature>
<feature type="binding site" evidence="13">
    <location>
        <position position="1158"/>
    </location>
    <ligand>
        <name>Zn(2+)</name>
        <dbReference type="ChEBI" id="CHEBI:29105"/>
    </ligand>
</feature>
<feature type="binding site" evidence="13">
    <location>
        <position position="1162"/>
    </location>
    <ligand>
        <name>Zn(2+)</name>
        <dbReference type="ChEBI" id="CHEBI:29105"/>
    </ligand>
</feature>
<feature type="binding site" evidence="13">
    <location>
        <position position="1186"/>
    </location>
    <ligand>
        <name>Zn(2+)</name>
        <dbReference type="ChEBI" id="CHEBI:29105"/>
    </ligand>
</feature>
<feature type="binding site" evidence="13">
    <location>
        <position position="1189"/>
    </location>
    <ligand>
        <name>Zn(2+)</name>
        <dbReference type="ChEBI" id="CHEBI:29105"/>
    </ligand>
</feature>
<feature type="binding site" evidence="1">
    <location>
        <position position="1210"/>
    </location>
    <ligand>
        <name>Mg(2+)</name>
        <dbReference type="ChEBI" id="CHEBI:18420"/>
        <label>3</label>
        <note>catalytic; for integrase activity</note>
    </ligand>
</feature>
<feature type="binding site" evidence="1">
    <location>
        <position position="1262"/>
    </location>
    <ligand>
        <name>Mg(2+)</name>
        <dbReference type="ChEBI" id="CHEBI:18420"/>
        <label>3</label>
        <note>catalytic; for integrase activity</note>
    </ligand>
</feature>
<feature type="binding site" evidence="5">
    <location>
        <position position="1298"/>
    </location>
    <ligand>
        <name>Mg(2+)</name>
        <dbReference type="ChEBI" id="CHEBI:18420"/>
        <label>3</label>
        <note>catalytic; for integrase activity</note>
    </ligand>
</feature>
<feature type="site" description="Cleavage; by viral protease" evidence="1">
    <location>
        <begin position="132"/>
        <end position="133"/>
    </location>
</feature>
<feature type="site" description="Cis/trans isomerization of proline peptide bond; by human PPIA/CYPA" evidence="1">
    <location>
        <begin position="221"/>
        <end position="222"/>
    </location>
</feature>
<feature type="site" description="Cleavage; by viral protease" evidence="1">
    <location>
        <begin position="363"/>
        <end position="364"/>
    </location>
</feature>
<feature type="site" description="Cleavage; by viral protease" evidence="1">
    <location>
        <begin position="376"/>
        <end position="377"/>
    </location>
</feature>
<feature type="site" description="Cleavage; by viral protease" evidence="8">
    <location>
        <begin position="431"/>
        <end position="432"/>
    </location>
</feature>
<feature type="site" description="Cleavage; by viral protease" evidence="1">
    <location>
        <begin position="439"/>
        <end position="440"/>
    </location>
</feature>
<feature type="site" description="Cleavage; by viral protease" evidence="1">
    <location>
        <begin position="487"/>
        <end position="488"/>
    </location>
</feature>
<feature type="site" description="Cleavage; by viral protease" evidence="1">
    <location>
        <begin position="586"/>
        <end position="587"/>
    </location>
</feature>
<feature type="site" description="Essential for RT p66/p51 heterodimerization" evidence="1">
    <location>
        <position position="987"/>
    </location>
</feature>
<feature type="site" description="Essential for RT p66/p51 heterodimerization" evidence="1">
    <location>
        <position position="1000"/>
    </location>
</feature>
<feature type="site" description="Cleavage; by viral protease; partial" evidence="1">
    <location>
        <begin position="1026"/>
        <end position="1027"/>
    </location>
</feature>
<feature type="site" description="Cleavage; by viral protease" evidence="1">
    <location>
        <begin position="1146"/>
        <end position="1147"/>
    </location>
</feature>
<feature type="modified residue" description="Phosphotyrosine; by host" evidence="1">
    <location>
        <position position="132"/>
    </location>
</feature>
<feature type="lipid moiety-binding region" description="N-myristoyl glycine; by host" evidence="1">
    <location>
        <position position="2"/>
    </location>
</feature>
<name>POL_HV1OY</name>
<sequence length="1434" mass="161772">MGARASVLSGGELDKWEKIRLRPGGKKKYQLKHIVWASRELERFAINPGLLETSEGCRQILGQLQPSLKTGSEEIRSLYNTVATLYCVHQKIEVKDTKEALDKIEEEQNKSKKKAQQTAADTGNSSQVSQNYPIVQNLQGQMVHQPISPRTLNAWVKVVEEKAFSPEVIPMFSALAEGATPQDLNTMLNTVGGHQAAMQMLKETINEEAAEWDRLHPVHAGPIAPGQMREPRGSDIAGTTSTLQEQIGWMTNNPPIPVGEIYKRWIILGLNKIVRMYSPTSILDIRQGPKEPFRDYVDRFYKTLRAEQASQDVKNWMTETLLVQNANPDCKTILKALGPAATLEEMMTACQGVGGPGHKARVLAEAMSQVNSVTVMMQKGNFKNQRKTVKCFNCGKEGHIAKNCRAPRKKGCWKCGREGHQMKDCTERQANFLREDLAFPQGKAREFSSEQTRANSPTSRELRVWGRDNNSPSEAGADRQGTVSFNLPQITLWQRPIVTIKIGGQLKEALLDTGADDTVLEEMNLPGRWKPKMIGGIGGFIKVRQYDQILIEICGHKAIGTVLVGPTPVNIIGRNLLTQLGCTLNFPISPIETVPVKLKPGMDGPKVKQWPLTEEKIKVLIEICTEMEKEGKISKVGPENPYNTPVFAIKKKDSTKWRKLVDFRELNKRTQDFWEVQLGIPHPAGLKKKKSVTVLDVGDAYFSVPLDKDFRKYTAFTIPSINNETPGIRYQYNVLPQGWKGSPAIFQSSMTKILEPFRKQNPDIVIYQYMDDLYVGSDLEIGQHRTKIEELRQHLLRWGFTTPDKKHQKEPPFLWMGYELHPDKWTVQPIMLPEKDSWTVNDIQKLVGKLNWASQIYAGIKVKNLCKLLRGTKALTEVIPLTEEAELELAENREILKEPVHGVYYDPSKDLVAELQKQGQGQWTYQIYQEPFKNLKTGKYARMRGAHTNDVKQLTEAVQKITQESIVIWGKTPKFKLPIQKETWEAWWTEYWQATWIPEWEFVNTPPLVKLWYQLEKDPIVGAETFYVDGAANRETKLGKAGYVTDRGRQKVVSLTDTTNQKTELQAIHLALQDSGLEVNIVTDSQYALGIIQAQPDKSESELVSQIIEQLIKKEKVYLAWVPAHKGIGGNEQVDKLVSAGIRKVLFLDGIDKAQEEHEKYHSNWRAMASDFNLPPVVAKEIVASCDKCQLKGEAMHGQVDCSPGIWQLDCTHLEGKIILVAVHVASGYIEAEVIPAETGQETAYFILKLAGRWPVKTIHTDNGSNFTSTTVKAACWWAGIKQEFGIPYNPQSQGVVESMNNELKKIIGQVRDQAEHLKTAVQMAVFIHNFKRKGGIGGYSAGERIVDIIATDIQTKELQKQITKIQNFRVYYRDSREPLWKGPAKLLWKGEGAVVIQDNSDIKVVPRRKAKIIRDYGKQMAGDDCVASRQDED</sequence>
<proteinExistence type="inferred from homology"/>
<keyword id="KW-1073">Activation of host caspases by virus</keyword>
<keyword id="KW-0014">AIDS</keyword>
<keyword id="KW-0064">Aspartyl protease</keyword>
<keyword id="KW-0167">Capsid protein</keyword>
<keyword id="KW-0229">DNA integration</keyword>
<keyword id="KW-0233">DNA recombination</keyword>
<keyword id="KW-0238">DNA-binding</keyword>
<keyword id="KW-0239">DNA-directed DNA polymerase</keyword>
<keyword id="KW-0255">Endonuclease</keyword>
<keyword id="KW-1262">Eukaryotic host gene expression shutoff by virus</keyword>
<keyword id="KW-1193">Eukaryotic host translation shutoff by virus</keyword>
<keyword id="KW-1032">Host cell membrane</keyword>
<keyword id="KW-1035">Host cytoplasm</keyword>
<keyword id="KW-1039">Host endosome</keyword>
<keyword id="KW-1190">Host gene expression shutoff by virus</keyword>
<keyword id="KW-1043">Host membrane</keyword>
<keyword id="KW-1048">Host nucleus</keyword>
<keyword id="KW-0945">Host-virus interaction</keyword>
<keyword id="KW-0378">Hydrolase</keyword>
<keyword id="KW-0446">Lipid-binding</keyword>
<keyword id="KW-0449">Lipoprotein</keyword>
<keyword id="KW-0460">Magnesium</keyword>
<keyword id="KW-0472">Membrane</keyword>
<keyword id="KW-0479">Metal-binding</keyword>
<keyword id="KW-1119">Modulation of host cell apoptosis by virus</keyword>
<keyword id="KW-0511">Multifunctional enzyme</keyword>
<keyword id="KW-0519">Myristate</keyword>
<keyword id="KW-0540">Nuclease</keyword>
<keyword id="KW-0548">Nucleotidyltransferase</keyword>
<keyword id="KW-0597">Phosphoprotein</keyword>
<keyword id="KW-0645">Protease</keyword>
<keyword id="KW-0677">Repeat</keyword>
<keyword id="KW-0688">Ribosomal frameshifting</keyword>
<keyword id="KW-0694">RNA-binding</keyword>
<keyword id="KW-0695">RNA-directed DNA polymerase</keyword>
<keyword id="KW-0808">Transferase</keyword>
<keyword id="KW-1179">Viral genome integration</keyword>
<keyword id="KW-0543">Viral nucleoprotein</keyword>
<keyword id="KW-1163">Viral penetration into host nucleus</keyword>
<keyword id="KW-1188">Viral release from host cell</keyword>
<keyword id="KW-0946">Virion</keyword>
<keyword id="KW-0917">Virion maturation</keyword>
<keyword id="KW-1160">Virus entry into host cell</keyword>
<keyword id="KW-0862">Zinc</keyword>
<keyword id="KW-0863">Zinc-finger</keyword>
<evidence type="ECO:0000250" key="1"/>
<evidence type="ECO:0000250" key="2">
    <source>
        <dbReference type="UniProtKB" id="P03347"/>
    </source>
</evidence>
<evidence type="ECO:0000250" key="3">
    <source>
        <dbReference type="UniProtKB" id="P03366"/>
    </source>
</evidence>
<evidence type="ECO:0000250" key="4">
    <source>
        <dbReference type="UniProtKB" id="P03367"/>
    </source>
</evidence>
<evidence type="ECO:0000250" key="5">
    <source>
        <dbReference type="UniProtKB" id="P04585"/>
    </source>
</evidence>
<evidence type="ECO:0000250" key="6">
    <source>
        <dbReference type="UniProtKB" id="P12493"/>
    </source>
</evidence>
<evidence type="ECO:0000250" key="7">
    <source>
        <dbReference type="UniProtKB" id="P12497"/>
    </source>
</evidence>
<evidence type="ECO:0000255" key="8"/>
<evidence type="ECO:0000255" key="9">
    <source>
        <dbReference type="PROSITE-ProRule" id="PRU00047"/>
    </source>
</evidence>
<evidence type="ECO:0000255" key="10">
    <source>
        <dbReference type="PROSITE-ProRule" id="PRU00275"/>
    </source>
</evidence>
<evidence type="ECO:0000255" key="11">
    <source>
        <dbReference type="PROSITE-ProRule" id="PRU00405"/>
    </source>
</evidence>
<evidence type="ECO:0000255" key="12">
    <source>
        <dbReference type="PROSITE-ProRule" id="PRU00408"/>
    </source>
</evidence>
<evidence type="ECO:0000255" key="13">
    <source>
        <dbReference type="PROSITE-ProRule" id="PRU00450"/>
    </source>
</evidence>
<evidence type="ECO:0000255" key="14">
    <source>
        <dbReference type="PROSITE-ProRule" id="PRU00457"/>
    </source>
</evidence>
<evidence type="ECO:0000255" key="15">
    <source>
        <dbReference type="PROSITE-ProRule" id="PRU00506"/>
    </source>
</evidence>
<evidence type="ECO:0000255" key="16">
    <source>
        <dbReference type="PROSITE-ProRule" id="PRU10094"/>
    </source>
</evidence>
<evidence type="ECO:0000256" key="17">
    <source>
        <dbReference type="SAM" id="MobiDB-lite"/>
    </source>
</evidence>
<evidence type="ECO:0000305" key="18"/>
<accession>P20892</accession>
<reference key="1">
    <citation type="journal article" date="1989" name="AIDS">
        <title>A highly defective HIV-1 strain isolated from a healthy Gabonese individual presenting an atypical western blot.</title>
        <authorList>
            <person name="Huet T."/>
            <person name="Dazza M.C."/>
            <person name="Brun-Vezinet F."/>
            <person name="Roelants G.E."/>
            <person name="Wain-Hobson S."/>
        </authorList>
    </citation>
    <scope>NUCLEOTIDE SEQUENCE [GENOMIC RNA]</scope>
</reference>
<reference key="2">
    <citation type="journal article" date="1996" name="Curr. Top. Microbiol. Immunol.">
        <title>Proteolytic processing and particle maturation.</title>
        <authorList>
            <person name="Vogt V.M."/>
        </authorList>
    </citation>
    <scope>REVIEW</scope>
</reference>
<reference key="3">
    <citation type="journal article" date="1999" name="J. Mol. Biol.">
        <title>Structural biology of HIV.</title>
        <authorList>
            <person name="Turner B.G."/>
            <person name="Summers M.F."/>
        </authorList>
    </citation>
    <scope>REVIEW</scope>
</reference>
<reference key="4">
    <citation type="journal article" date="2001" name="Annu. Rev. Genet.">
        <title>Mechanisms of retroviral recombination.</title>
        <authorList>
            <person name="Negroni M."/>
            <person name="Buc H."/>
        </authorList>
    </citation>
    <scope>REVIEW</scope>
</reference>
<reference key="5">
    <citation type="journal article" date="2002" name="Genome Biol.">
        <title>Retroviral proteases.</title>
        <authorList>
            <person name="Dunn B.M."/>
            <person name="Goodenow M.M."/>
            <person name="Gustchina A."/>
            <person name="Wlodawer A."/>
        </authorList>
    </citation>
    <scope>REVIEW</scope>
</reference>
<reference key="6">
    <citation type="journal article" date="2003" name="Biochim. Biophys. Acta">
        <title>Role of HIV-1 Gag domains in viral assembly.</title>
        <authorList>
            <person name="Scarlata S."/>
            <person name="Carter C."/>
        </authorList>
    </citation>
    <scope>REVIEW</scope>
</reference>
<organism>
    <name type="scientific">Human immunodeficiency virus type 1 group M subtype B (isolate OYI)</name>
    <name type="common">HIV-1</name>
    <dbReference type="NCBI Taxonomy" id="11699"/>
    <lineage>
        <taxon>Viruses</taxon>
        <taxon>Riboviria</taxon>
        <taxon>Pararnavirae</taxon>
        <taxon>Artverviricota</taxon>
        <taxon>Revtraviricetes</taxon>
        <taxon>Ortervirales</taxon>
        <taxon>Retroviridae</taxon>
        <taxon>Orthoretrovirinae</taxon>
        <taxon>Lentivirus</taxon>
        <taxon>Human immunodeficiency virus type 1</taxon>
    </lineage>
</organism>
<dbReference type="EC" id="3.4.23.16"/>
<dbReference type="EC" id="2.7.7.49"/>
<dbReference type="EC" id="2.7.7.7"/>
<dbReference type="EC" id="3.1.26.13"/>
<dbReference type="EC" id="3.1.13.2"/>
<dbReference type="EC" id="2.7.7.-" evidence="5"/>
<dbReference type="EC" id="3.1.-.-" evidence="5"/>
<dbReference type="EMBL" id="M26727">
    <property type="protein sequence ID" value="AAA83392.1"/>
    <property type="status" value="ALT_SEQ"/>
    <property type="molecule type" value="Genomic_RNA"/>
</dbReference>
<dbReference type="BMRB" id="P20892"/>
<dbReference type="SMR" id="P20892"/>
<dbReference type="MEROPS" id="A02.001"/>
<dbReference type="PRO" id="PR:P20892"/>
<dbReference type="Proteomes" id="UP000121275">
    <property type="component" value="Genome"/>
</dbReference>
<dbReference type="GO" id="GO:0043657">
    <property type="term" value="C:host cell"/>
    <property type="evidence" value="ECO:0007669"/>
    <property type="project" value="GOC"/>
</dbReference>
<dbReference type="GO" id="GO:0042025">
    <property type="term" value="C:host cell nucleus"/>
    <property type="evidence" value="ECO:0007669"/>
    <property type="project" value="UniProtKB-SubCell"/>
</dbReference>
<dbReference type="GO" id="GO:0020002">
    <property type="term" value="C:host cell plasma membrane"/>
    <property type="evidence" value="ECO:0007669"/>
    <property type="project" value="UniProtKB-SubCell"/>
</dbReference>
<dbReference type="GO" id="GO:0072494">
    <property type="term" value="C:host multivesicular body"/>
    <property type="evidence" value="ECO:0007669"/>
    <property type="project" value="UniProtKB-SubCell"/>
</dbReference>
<dbReference type="GO" id="GO:0016020">
    <property type="term" value="C:membrane"/>
    <property type="evidence" value="ECO:0007669"/>
    <property type="project" value="UniProtKB-KW"/>
</dbReference>
<dbReference type="GO" id="GO:0019013">
    <property type="term" value="C:viral nucleocapsid"/>
    <property type="evidence" value="ECO:0007669"/>
    <property type="project" value="UniProtKB-KW"/>
</dbReference>
<dbReference type="GO" id="GO:0055036">
    <property type="term" value="C:virion membrane"/>
    <property type="evidence" value="ECO:0007669"/>
    <property type="project" value="UniProtKB-SubCell"/>
</dbReference>
<dbReference type="GO" id="GO:0004190">
    <property type="term" value="F:aspartic-type endopeptidase activity"/>
    <property type="evidence" value="ECO:0007669"/>
    <property type="project" value="UniProtKB-KW"/>
</dbReference>
<dbReference type="GO" id="GO:0003677">
    <property type="term" value="F:DNA binding"/>
    <property type="evidence" value="ECO:0007669"/>
    <property type="project" value="UniProtKB-KW"/>
</dbReference>
<dbReference type="GO" id="GO:0003887">
    <property type="term" value="F:DNA-directed DNA polymerase activity"/>
    <property type="evidence" value="ECO:0007669"/>
    <property type="project" value="UniProtKB-KW"/>
</dbReference>
<dbReference type="GO" id="GO:0004533">
    <property type="term" value="F:exoribonuclease H activity"/>
    <property type="evidence" value="ECO:0007669"/>
    <property type="project" value="UniProtKB-EC"/>
</dbReference>
<dbReference type="GO" id="GO:0008289">
    <property type="term" value="F:lipid binding"/>
    <property type="evidence" value="ECO:0007669"/>
    <property type="project" value="UniProtKB-KW"/>
</dbReference>
<dbReference type="GO" id="GO:0035613">
    <property type="term" value="F:RNA stem-loop binding"/>
    <property type="evidence" value="ECO:0007669"/>
    <property type="project" value="TreeGrafter"/>
</dbReference>
<dbReference type="GO" id="GO:0003964">
    <property type="term" value="F:RNA-directed DNA polymerase activity"/>
    <property type="evidence" value="ECO:0007669"/>
    <property type="project" value="UniProtKB-KW"/>
</dbReference>
<dbReference type="GO" id="GO:0004523">
    <property type="term" value="F:RNA-DNA hybrid ribonuclease activity"/>
    <property type="evidence" value="ECO:0007669"/>
    <property type="project" value="InterPro"/>
</dbReference>
<dbReference type="GO" id="GO:0005198">
    <property type="term" value="F:structural molecule activity"/>
    <property type="evidence" value="ECO:0007669"/>
    <property type="project" value="InterPro"/>
</dbReference>
<dbReference type="GO" id="GO:0008270">
    <property type="term" value="F:zinc ion binding"/>
    <property type="evidence" value="ECO:0007669"/>
    <property type="project" value="UniProtKB-KW"/>
</dbReference>
<dbReference type="GO" id="GO:0015074">
    <property type="term" value="P:DNA integration"/>
    <property type="evidence" value="ECO:0007669"/>
    <property type="project" value="UniProtKB-KW"/>
</dbReference>
<dbReference type="GO" id="GO:0006310">
    <property type="term" value="P:DNA recombination"/>
    <property type="evidence" value="ECO:0007669"/>
    <property type="project" value="UniProtKB-KW"/>
</dbReference>
<dbReference type="GO" id="GO:0075713">
    <property type="term" value="P:establishment of integrated proviral latency"/>
    <property type="evidence" value="ECO:0007669"/>
    <property type="project" value="UniProtKB-KW"/>
</dbReference>
<dbReference type="GO" id="GO:0006508">
    <property type="term" value="P:proteolysis"/>
    <property type="evidence" value="ECO:0007669"/>
    <property type="project" value="UniProtKB-KW"/>
</dbReference>
<dbReference type="GO" id="GO:0046718">
    <property type="term" value="P:symbiont entry into host cell"/>
    <property type="evidence" value="ECO:0007669"/>
    <property type="project" value="UniProtKB-KW"/>
</dbReference>
<dbReference type="GO" id="GO:0052151">
    <property type="term" value="P:symbiont-mediated activation of host apoptosis"/>
    <property type="evidence" value="ECO:0007669"/>
    <property type="project" value="UniProtKB-KW"/>
</dbReference>
<dbReference type="GO" id="GO:0039657">
    <property type="term" value="P:symbiont-mediated suppression of host gene expression"/>
    <property type="evidence" value="ECO:0007669"/>
    <property type="project" value="UniProtKB-KW"/>
</dbReference>
<dbReference type="GO" id="GO:0044826">
    <property type="term" value="P:viral genome integration into host DNA"/>
    <property type="evidence" value="ECO:0007669"/>
    <property type="project" value="UniProtKB-KW"/>
</dbReference>
<dbReference type="GO" id="GO:0075732">
    <property type="term" value="P:viral penetration into host nucleus"/>
    <property type="evidence" value="ECO:0007669"/>
    <property type="project" value="UniProtKB-KW"/>
</dbReference>
<dbReference type="GO" id="GO:0075523">
    <property type="term" value="P:viral translational frameshifting"/>
    <property type="evidence" value="ECO:0007669"/>
    <property type="project" value="UniProtKB-KW"/>
</dbReference>
<dbReference type="CDD" id="cd05482">
    <property type="entry name" value="HIV_retropepsin_like"/>
    <property type="match status" value="1"/>
</dbReference>
<dbReference type="CDD" id="cd01645">
    <property type="entry name" value="RT_Rtv"/>
    <property type="match status" value="1"/>
</dbReference>
<dbReference type="FunFam" id="1.10.1200.30:FF:000001">
    <property type="entry name" value="Gag polyprotein"/>
    <property type="match status" value="1"/>
</dbReference>
<dbReference type="FunFam" id="1.10.150.90:FF:000001">
    <property type="entry name" value="Gag polyprotein"/>
    <property type="match status" value="1"/>
</dbReference>
<dbReference type="FunFam" id="1.10.375.10:FF:000001">
    <property type="entry name" value="Gag polyprotein"/>
    <property type="match status" value="1"/>
</dbReference>
<dbReference type="FunFam" id="4.10.60.10:FF:000001">
    <property type="entry name" value="Gag polyprotein"/>
    <property type="match status" value="1"/>
</dbReference>
<dbReference type="FunFam" id="2.40.70.10:FF:000001">
    <property type="entry name" value="Gag-Pol polyprotein"/>
    <property type="match status" value="1"/>
</dbReference>
<dbReference type="FunFam" id="3.30.420.10:FF:000025">
    <property type="entry name" value="Gag-Pol polyprotein"/>
    <property type="match status" value="1"/>
</dbReference>
<dbReference type="FunFam" id="2.30.30.10:FF:000001">
    <property type="entry name" value="POL polyprotein"/>
    <property type="match status" value="1"/>
</dbReference>
<dbReference type="FunFam" id="3.30.420.10:FF:000017">
    <property type="entry name" value="POL polyprotein"/>
    <property type="match status" value="1"/>
</dbReference>
<dbReference type="FunFam" id="3.30.70.270:FF:000016">
    <property type="entry name" value="POL polyprotein"/>
    <property type="match status" value="1"/>
</dbReference>
<dbReference type="Gene3D" id="1.10.10.200">
    <property type="match status" value="1"/>
</dbReference>
<dbReference type="Gene3D" id="1.10.1200.30">
    <property type="match status" value="1"/>
</dbReference>
<dbReference type="Gene3D" id="3.30.70.270">
    <property type="match status" value="3"/>
</dbReference>
<dbReference type="Gene3D" id="2.40.70.10">
    <property type="entry name" value="Acid Proteases"/>
    <property type="match status" value="1"/>
</dbReference>
<dbReference type="Gene3D" id="3.10.10.10">
    <property type="entry name" value="HIV Type 1 Reverse Transcriptase, subunit A, domain 1"/>
    <property type="match status" value="1"/>
</dbReference>
<dbReference type="Gene3D" id="1.10.375.10">
    <property type="entry name" value="Human Immunodeficiency Virus Type 1 Capsid Protein"/>
    <property type="match status" value="1"/>
</dbReference>
<dbReference type="Gene3D" id="1.10.150.90">
    <property type="entry name" value="Immunodeficiency lentiviruses, gag gene matrix protein p17"/>
    <property type="match status" value="1"/>
</dbReference>
<dbReference type="Gene3D" id="2.30.30.10">
    <property type="entry name" value="Integrase, C-terminal domain superfamily, retroviral"/>
    <property type="match status" value="1"/>
</dbReference>
<dbReference type="Gene3D" id="3.30.420.10">
    <property type="entry name" value="Ribonuclease H-like superfamily/Ribonuclease H"/>
    <property type="match status" value="2"/>
</dbReference>
<dbReference type="Gene3D" id="1.20.5.760">
    <property type="entry name" value="Single helix bin"/>
    <property type="match status" value="1"/>
</dbReference>
<dbReference type="Gene3D" id="4.10.60.10">
    <property type="entry name" value="Zinc finger, CCHC-type"/>
    <property type="match status" value="1"/>
</dbReference>
<dbReference type="InterPro" id="IPR001969">
    <property type="entry name" value="Aspartic_peptidase_AS"/>
</dbReference>
<dbReference type="InterPro" id="IPR043502">
    <property type="entry name" value="DNA/RNA_pol_sf"/>
</dbReference>
<dbReference type="InterPro" id="IPR045345">
    <property type="entry name" value="Gag_p24_C"/>
</dbReference>
<dbReference type="InterPro" id="IPR017856">
    <property type="entry name" value="Integrase-like_N"/>
</dbReference>
<dbReference type="InterPro" id="IPR036862">
    <property type="entry name" value="Integrase_C_dom_sf_retrovir"/>
</dbReference>
<dbReference type="InterPro" id="IPR001037">
    <property type="entry name" value="Integrase_C_retrovir"/>
</dbReference>
<dbReference type="InterPro" id="IPR001584">
    <property type="entry name" value="Integrase_cat-core"/>
</dbReference>
<dbReference type="InterPro" id="IPR003308">
    <property type="entry name" value="Integrase_Zn-bd_dom_N"/>
</dbReference>
<dbReference type="InterPro" id="IPR000071">
    <property type="entry name" value="Lentvrl_matrix_N"/>
</dbReference>
<dbReference type="InterPro" id="IPR012344">
    <property type="entry name" value="Matrix_HIV/RSV_N"/>
</dbReference>
<dbReference type="InterPro" id="IPR001995">
    <property type="entry name" value="Peptidase_A2_cat"/>
</dbReference>
<dbReference type="InterPro" id="IPR021109">
    <property type="entry name" value="Peptidase_aspartic_dom_sf"/>
</dbReference>
<dbReference type="InterPro" id="IPR034170">
    <property type="entry name" value="Retropepsin-like_cat_dom"/>
</dbReference>
<dbReference type="InterPro" id="IPR018061">
    <property type="entry name" value="Retropepsins"/>
</dbReference>
<dbReference type="InterPro" id="IPR008916">
    <property type="entry name" value="Retrov_capsid_C"/>
</dbReference>
<dbReference type="InterPro" id="IPR008919">
    <property type="entry name" value="Retrov_capsid_N"/>
</dbReference>
<dbReference type="InterPro" id="IPR010999">
    <property type="entry name" value="Retrovr_matrix"/>
</dbReference>
<dbReference type="InterPro" id="IPR043128">
    <property type="entry name" value="Rev_trsase/Diguanyl_cyclase"/>
</dbReference>
<dbReference type="InterPro" id="IPR012337">
    <property type="entry name" value="RNaseH-like_sf"/>
</dbReference>
<dbReference type="InterPro" id="IPR002156">
    <property type="entry name" value="RNaseH_domain"/>
</dbReference>
<dbReference type="InterPro" id="IPR036397">
    <property type="entry name" value="RNaseH_sf"/>
</dbReference>
<dbReference type="InterPro" id="IPR000477">
    <property type="entry name" value="RT_dom"/>
</dbReference>
<dbReference type="InterPro" id="IPR010659">
    <property type="entry name" value="RVT_connect"/>
</dbReference>
<dbReference type="InterPro" id="IPR010661">
    <property type="entry name" value="RVT_thumb"/>
</dbReference>
<dbReference type="InterPro" id="IPR001878">
    <property type="entry name" value="Znf_CCHC"/>
</dbReference>
<dbReference type="InterPro" id="IPR036875">
    <property type="entry name" value="Znf_CCHC_sf"/>
</dbReference>
<dbReference type="PANTHER" id="PTHR41694">
    <property type="entry name" value="ENDOGENOUS RETROVIRUS GROUP K MEMBER POL PROTEIN"/>
    <property type="match status" value="1"/>
</dbReference>
<dbReference type="PANTHER" id="PTHR41694:SF3">
    <property type="entry name" value="RNA-DIRECTED DNA POLYMERASE-RELATED"/>
    <property type="match status" value="1"/>
</dbReference>
<dbReference type="Pfam" id="PF00540">
    <property type="entry name" value="Gag_p17"/>
    <property type="match status" value="1"/>
</dbReference>
<dbReference type="Pfam" id="PF19317">
    <property type="entry name" value="Gag_p24_C"/>
    <property type="match status" value="1"/>
</dbReference>
<dbReference type="Pfam" id="PF00552">
    <property type="entry name" value="IN_DBD_C"/>
    <property type="match status" value="1"/>
</dbReference>
<dbReference type="Pfam" id="PF02022">
    <property type="entry name" value="Integrase_Zn"/>
    <property type="match status" value="1"/>
</dbReference>
<dbReference type="Pfam" id="PF00075">
    <property type="entry name" value="RNase_H"/>
    <property type="match status" value="1"/>
</dbReference>
<dbReference type="Pfam" id="PF00665">
    <property type="entry name" value="rve"/>
    <property type="match status" value="1"/>
</dbReference>
<dbReference type="Pfam" id="PF00077">
    <property type="entry name" value="RVP"/>
    <property type="match status" value="1"/>
</dbReference>
<dbReference type="Pfam" id="PF00078">
    <property type="entry name" value="RVT_1"/>
    <property type="match status" value="1"/>
</dbReference>
<dbReference type="Pfam" id="PF06815">
    <property type="entry name" value="RVT_connect"/>
    <property type="match status" value="1"/>
</dbReference>
<dbReference type="Pfam" id="PF06817">
    <property type="entry name" value="RVT_thumb"/>
    <property type="match status" value="1"/>
</dbReference>
<dbReference type="Pfam" id="PF00098">
    <property type="entry name" value="zf-CCHC"/>
    <property type="match status" value="2"/>
</dbReference>
<dbReference type="PRINTS" id="PR00234">
    <property type="entry name" value="HIV1MATRIX"/>
</dbReference>
<dbReference type="SMART" id="SM00343">
    <property type="entry name" value="ZnF_C2HC"/>
    <property type="match status" value="2"/>
</dbReference>
<dbReference type="SUPFAM" id="SSF50630">
    <property type="entry name" value="Acid proteases"/>
    <property type="match status" value="1"/>
</dbReference>
<dbReference type="SUPFAM" id="SSF50122">
    <property type="entry name" value="DNA-binding domain of retroviral integrase"/>
    <property type="match status" value="1"/>
</dbReference>
<dbReference type="SUPFAM" id="SSF56672">
    <property type="entry name" value="DNA/RNA polymerases"/>
    <property type="match status" value="1"/>
</dbReference>
<dbReference type="SUPFAM" id="SSF46919">
    <property type="entry name" value="N-terminal Zn binding domain of HIV integrase"/>
    <property type="match status" value="1"/>
</dbReference>
<dbReference type="SUPFAM" id="SSF47836">
    <property type="entry name" value="Retroviral matrix proteins"/>
    <property type="match status" value="1"/>
</dbReference>
<dbReference type="SUPFAM" id="SSF47353">
    <property type="entry name" value="Retrovirus capsid dimerization domain-like"/>
    <property type="match status" value="1"/>
</dbReference>
<dbReference type="SUPFAM" id="SSF47943">
    <property type="entry name" value="Retrovirus capsid protein, N-terminal core domain"/>
    <property type="match status" value="1"/>
</dbReference>
<dbReference type="SUPFAM" id="SSF57756">
    <property type="entry name" value="Retrovirus zinc finger-like domains"/>
    <property type="match status" value="1"/>
</dbReference>
<dbReference type="SUPFAM" id="SSF53098">
    <property type="entry name" value="Ribonuclease H-like"/>
    <property type="match status" value="2"/>
</dbReference>
<dbReference type="PROSITE" id="PS50175">
    <property type="entry name" value="ASP_PROT_RETROV"/>
    <property type="match status" value="1"/>
</dbReference>
<dbReference type="PROSITE" id="PS00141">
    <property type="entry name" value="ASP_PROTEASE"/>
    <property type="match status" value="1"/>
</dbReference>
<dbReference type="PROSITE" id="PS50994">
    <property type="entry name" value="INTEGRASE"/>
    <property type="match status" value="1"/>
</dbReference>
<dbReference type="PROSITE" id="PS51027">
    <property type="entry name" value="INTEGRASE_DBD"/>
    <property type="match status" value="1"/>
</dbReference>
<dbReference type="PROSITE" id="PS50879">
    <property type="entry name" value="RNASE_H_1"/>
    <property type="match status" value="1"/>
</dbReference>
<dbReference type="PROSITE" id="PS50878">
    <property type="entry name" value="RT_POL"/>
    <property type="match status" value="1"/>
</dbReference>
<dbReference type="PROSITE" id="PS50158">
    <property type="entry name" value="ZF_CCHC"/>
    <property type="match status" value="2"/>
</dbReference>
<dbReference type="PROSITE" id="PS50876">
    <property type="entry name" value="ZF_INTEGRASE"/>
    <property type="match status" value="1"/>
</dbReference>